<keyword id="KW-0963">Cytoplasm</keyword>
<keyword id="KW-1185">Reference proteome</keyword>
<keyword id="KW-0690">Ribosome biogenesis</keyword>
<accession>P0A8A9</accession>
<accession>P03843</accession>
<accession>Q8X9M1</accession>
<reference key="1">
    <citation type="journal article" date="2002" name="Proc. Natl. Acad. Sci. U.S.A.">
        <title>Extensive mosaic structure revealed by the complete genome sequence of uropathogenic Escherichia coli.</title>
        <authorList>
            <person name="Welch R.A."/>
            <person name="Burland V."/>
            <person name="Plunkett G. III"/>
            <person name="Redford P."/>
            <person name="Roesch P."/>
            <person name="Rasko D."/>
            <person name="Buckles E.L."/>
            <person name="Liou S.-R."/>
            <person name="Boutin A."/>
            <person name="Hackett J."/>
            <person name="Stroud D."/>
            <person name="Mayhew G.F."/>
            <person name="Rose D.J."/>
            <person name="Zhou S."/>
            <person name="Schwartz D.C."/>
            <person name="Perna N.T."/>
            <person name="Mobley H.L.T."/>
            <person name="Donnenberg M.S."/>
            <person name="Blattner F.R."/>
        </authorList>
    </citation>
    <scope>NUCLEOTIDE SEQUENCE [LARGE SCALE GENOMIC DNA]</scope>
    <source>
        <strain>CFT073 / ATCC 700928 / UPEC</strain>
    </source>
</reference>
<sequence>MGLSTLEQKLTEMITAPVEALGFELVGIEFIRGRTSTLRIYIDSEDGINVDDCADVSHQVSAVLDVEDPITVAYNLEVSSPGLDRPLFTAEHYARFVGEEVTLVLRMAVQNRRKWQGVIKAVDGEMITVTVEGKDEVFALSNIQKANLVPHF</sequence>
<gene>
    <name evidence="1" type="primary">rimP</name>
    <name type="ordered locus">c3927</name>
</gene>
<organism>
    <name type="scientific">Escherichia coli O6:H1 (strain CFT073 / ATCC 700928 / UPEC)</name>
    <dbReference type="NCBI Taxonomy" id="199310"/>
    <lineage>
        <taxon>Bacteria</taxon>
        <taxon>Pseudomonadati</taxon>
        <taxon>Pseudomonadota</taxon>
        <taxon>Gammaproteobacteria</taxon>
        <taxon>Enterobacterales</taxon>
        <taxon>Enterobacteriaceae</taxon>
        <taxon>Escherichia</taxon>
    </lineage>
</organism>
<proteinExistence type="inferred from homology"/>
<dbReference type="EMBL" id="AE014075">
    <property type="protein sequence ID" value="AAN82368.1"/>
    <property type="status" value="ALT_INIT"/>
    <property type="molecule type" value="Genomic_DNA"/>
</dbReference>
<dbReference type="SMR" id="P0A8A9"/>
<dbReference type="STRING" id="199310.c3927"/>
<dbReference type="KEGG" id="ecc:c3927"/>
<dbReference type="eggNOG" id="COG0779">
    <property type="taxonomic scope" value="Bacteria"/>
</dbReference>
<dbReference type="HOGENOM" id="CLU_070525_1_1_6"/>
<dbReference type="Proteomes" id="UP000001410">
    <property type="component" value="Chromosome"/>
</dbReference>
<dbReference type="GO" id="GO:0005829">
    <property type="term" value="C:cytosol"/>
    <property type="evidence" value="ECO:0007669"/>
    <property type="project" value="TreeGrafter"/>
</dbReference>
<dbReference type="GO" id="GO:0000028">
    <property type="term" value="P:ribosomal small subunit assembly"/>
    <property type="evidence" value="ECO:0007669"/>
    <property type="project" value="TreeGrafter"/>
</dbReference>
<dbReference type="GO" id="GO:0006412">
    <property type="term" value="P:translation"/>
    <property type="evidence" value="ECO:0007669"/>
    <property type="project" value="TreeGrafter"/>
</dbReference>
<dbReference type="CDD" id="cd01734">
    <property type="entry name" value="YlxS_C"/>
    <property type="match status" value="1"/>
</dbReference>
<dbReference type="FunFam" id="2.30.30.180:FF:000001">
    <property type="entry name" value="Ribosome maturation factor RimP"/>
    <property type="match status" value="1"/>
</dbReference>
<dbReference type="FunFam" id="3.30.300.70:FF:000001">
    <property type="entry name" value="Ribosome maturation factor RimP"/>
    <property type="match status" value="1"/>
</dbReference>
<dbReference type="Gene3D" id="2.30.30.180">
    <property type="entry name" value="Ribosome maturation factor RimP, C-terminal domain"/>
    <property type="match status" value="1"/>
</dbReference>
<dbReference type="Gene3D" id="3.30.300.70">
    <property type="entry name" value="RimP-like superfamily, N-terminal"/>
    <property type="match status" value="1"/>
</dbReference>
<dbReference type="HAMAP" id="MF_01077">
    <property type="entry name" value="RimP"/>
    <property type="match status" value="1"/>
</dbReference>
<dbReference type="InterPro" id="IPR003728">
    <property type="entry name" value="Ribosome_maturation_RimP"/>
</dbReference>
<dbReference type="InterPro" id="IPR028998">
    <property type="entry name" value="RimP_C"/>
</dbReference>
<dbReference type="InterPro" id="IPR036847">
    <property type="entry name" value="RimP_C_sf"/>
</dbReference>
<dbReference type="InterPro" id="IPR028989">
    <property type="entry name" value="RimP_N"/>
</dbReference>
<dbReference type="InterPro" id="IPR035956">
    <property type="entry name" value="RimP_N_sf"/>
</dbReference>
<dbReference type="NCBIfam" id="NF000927">
    <property type="entry name" value="PRK00092.1-1"/>
    <property type="match status" value="1"/>
</dbReference>
<dbReference type="PANTHER" id="PTHR33867">
    <property type="entry name" value="RIBOSOME MATURATION FACTOR RIMP"/>
    <property type="match status" value="1"/>
</dbReference>
<dbReference type="PANTHER" id="PTHR33867:SF1">
    <property type="entry name" value="RIBOSOME MATURATION FACTOR RIMP"/>
    <property type="match status" value="1"/>
</dbReference>
<dbReference type="Pfam" id="PF17384">
    <property type="entry name" value="DUF150_C"/>
    <property type="match status" value="1"/>
</dbReference>
<dbReference type="Pfam" id="PF02576">
    <property type="entry name" value="RimP_N"/>
    <property type="match status" value="1"/>
</dbReference>
<dbReference type="SUPFAM" id="SSF74942">
    <property type="entry name" value="YhbC-like, C-terminal domain"/>
    <property type="match status" value="1"/>
</dbReference>
<dbReference type="SUPFAM" id="SSF75420">
    <property type="entry name" value="YhbC-like, N-terminal domain"/>
    <property type="match status" value="1"/>
</dbReference>
<feature type="chain" id="PRO_0000181870" description="Ribosome maturation factor RimP">
    <location>
        <begin position="1"/>
        <end position="152"/>
    </location>
</feature>
<name>RIMP_ECOL6</name>
<protein>
    <recommendedName>
        <fullName evidence="1">Ribosome maturation factor RimP</fullName>
    </recommendedName>
</protein>
<comment type="function">
    <text evidence="1">Required for maturation of 30S ribosomal subunits.</text>
</comment>
<comment type="subcellular location">
    <subcellularLocation>
        <location evidence="1">Cytoplasm</location>
    </subcellularLocation>
</comment>
<comment type="similarity">
    <text evidence="1">Belongs to the RimP family.</text>
</comment>
<comment type="sequence caution" evidence="2">
    <conflict type="erroneous initiation">
        <sequence resource="EMBL-CDS" id="AAN82368"/>
    </conflict>
</comment>
<evidence type="ECO:0000255" key="1">
    <source>
        <dbReference type="HAMAP-Rule" id="MF_01077"/>
    </source>
</evidence>
<evidence type="ECO:0000305" key="2"/>